<gene>
    <name evidence="1" type="primary">glk</name>
    <name type="ordered locus">YpAngola_A2728</name>
</gene>
<protein>
    <recommendedName>
        <fullName evidence="1">Glucokinase</fullName>
        <ecNumber evidence="1">2.7.1.2</ecNumber>
    </recommendedName>
    <alternativeName>
        <fullName evidence="1">Glucose kinase</fullName>
    </alternativeName>
</protein>
<proteinExistence type="inferred from homology"/>
<dbReference type="EC" id="2.7.1.2" evidence="1"/>
<dbReference type="EMBL" id="CP000901">
    <property type="protein sequence ID" value="ABX85202.1"/>
    <property type="molecule type" value="Genomic_DNA"/>
</dbReference>
<dbReference type="RefSeq" id="WP_002211615.1">
    <property type="nucleotide sequence ID" value="NZ_CP009935.1"/>
</dbReference>
<dbReference type="SMR" id="A9QZG0"/>
<dbReference type="GeneID" id="57975727"/>
<dbReference type="KEGG" id="ypg:YpAngola_A2728"/>
<dbReference type="PATRIC" id="fig|349746.12.peg.3760"/>
<dbReference type="GO" id="GO:0005829">
    <property type="term" value="C:cytosol"/>
    <property type="evidence" value="ECO:0007669"/>
    <property type="project" value="TreeGrafter"/>
</dbReference>
<dbReference type="GO" id="GO:0005524">
    <property type="term" value="F:ATP binding"/>
    <property type="evidence" value="ECO:0007669"/>
    <property type="project" value="UniProtKB-UniRule"/>
</dbReference>
<dbReference type="GO" id="GO:0005536">
    <property type="term" value="F:D-glucose binding"/>
    <property type="evidence" value="ECO:0007669"/>
    <property type="project" value="InterPro"/>
</dbReference>
<dbReference type="GO" id="GO:0004340">
    <property type="term" value="F:glucokinase activity"/>
    <property type="evidence" value="ECO:0007669"/>
    <property type="project" value="UniProtKB-UniRule"/>
</dbReference>
<dbReference type="GO" id="GO:0006096">
    <property type="term" value="P:glycolytic process"/>
    <property type="evidence" value="ECO:0007669"/>
    <property type="project" value="UniProtKB-UniRule"/>
</dbReference>
<dbReference type="CDD" id="cd24008">
    <property type="entry name" value="ASKHA_NBD_GLK"/>
    <property type="match status" value="1"/>
</dbReference>
<dbReference type="FunFam" id="3.30.420.40:FF:000045">
    <property type="entry name" value="Glucokinase"/>
    <property type="match status" value="1"/>
</dbReference>
<dbReference type="FunFam" id="3.40.367.20:FF:000002">
    <property type="entry name" value="Glucokinase"/>
    <property type="match status" value="1"/>
</dbReference>
<dbReference type="Gene3D" id="3.30.420.40">
    <property type="match status" value="1"/>
</dbReference>
<dbReference type="Gene3D" id="3.40.367.20">
    <property type="match status" value="1"/>
</dbReference>
<dbReference type="HAMAP" id="MF_00524">
    <property type="entry name" value="Glucokinase"/>
    <property type="match status" value="1"/>
</dbReference>
<dbReference type="InterPro" id="IPR043129">
    <property type="entry name" value="ATPase_NBD"/>
</dbReference>
<dbReference type="InterPro" id="IPR050201">
    <property type="entry name" value="Bacterial_glucokinase"/>
</dbReference>
<dbReference type="InterPro" id="IPR003836">
    <property type="entry name" value="Glucokinase"/>
</dbReference>
<dbReference type="NCBIfam" id="TIGR00749">
    <property type="entry name" value="glk"/>
    <property type="match status" value="1"/>
</dbReference>
<dbReference type="NCBIfam" id="NF001414">
    <property type="entry name" value="PRK00292.1-1"/>
    <property type="match status" value="1"/>
</dbReference>
<dbReference type="NCBIfam" id="NF001416">
    <property type="entry name" value="PRK00292.1-3"/>
    <property type="match status" value="1"/>
</dbReference>
<dbReference type="NCBIfam" id="NF009073">
    <property type="entry name" value="PRK12408.1"/>
    <property type="match status" value="1"/>
</dbReference>
<dbReference type="PANTHER" id="PTHR47690">
    <property type="entry name" value="GLUCOKINASE"/>
    <property type="match status" value="1"/>
</dbReference>
<dbReference type="PANTHER" id="PTHR47690:SF1">
    <property type="entry name" value="GLUCOKINASE"/>
    <property type="match status" value="1"/>
</dbReference>
<dbReference type="Pfam" id="PF02685">
    <property type="entry name" value="Glucokinase"/>
    <property type="match status" value="1"/>
</dbReference>
<dbReference type="SUPFAM" id="SSF53067">
    <property type="entry name" value="Actin-like ATPase domain"/>
    <property type="match status" value="1"/>
</dbReference>
<sequence>MTTYALVGDVGGTNARLALCAVATGEILQAKTYSGLEYESLEDVIKQYLSEHQAKVTDACIAIACPITGDWVAMTNHTWAFSIAAMQQNLGLDHLEVINDFTAVSMAIPVLPAQDVLQFGGTQPQPGKPVAVYGAGTGLGVAHLVNVDRRWISLAGEGGHVDFAPNSEEEDQILAVLRQELGHVSAERVLSGPGLVNLYRAIVISDARLPEKLAPKDITARALADSCTDCRRALSLFCVIMGRFGGNLALNLSTFGGVYIAGGIVPRFMEFFKASGFRAAFEDKGRFKDFLQDIPVYMITHPQPGLLGAGAYLRQKLGYELSS</sequence>
<keyword id="KW-0067">ATP-binding</keyword>
<keyword id="KW-0963">Cytoplasm</keyword>
<keyword id="KW-0324">Glycolysis</keyword>
<keyword id="KW-0418">Kinase</keyword>
<keyword id="KW-0547">Nucleotide-binding</keyword>
<keyword id="KW-0808">Transferase</keyword>
<name>GLK_YERPG</name>
<comment type="catalytic activity">
    <reaction evidence="1">
        <text>D-glucose + ATP = D-glucose 6-phosphate + ADP + H(+)</text>
        <dbReference type="Rhea" id="RHEA:17825"/>
        <dbReference type="ChEBI" id="CHEBI:4167"/>
        <dbReference type="ChEBI" id="CHEBI:15378"/>
        <dbReference type="ChEBI" id="CHEBI:30616"/>
        <dbReference type="ChEBI" id="CHEBI:61548"/>
        <dbReference type="ChEBI" id="CHEBI:456216"/>
        <dbReference type="EC" id="2.7.1.2"/>
    </reaction>
</comment>
<comment type="subcellular location">
    <subcellularLocation>
        <location evidence="1">Cytoplasm</location>
    </subcellularLocation>
</comment>
<comment type="similarity">
    <text evidence="1">Belongs to the bacterial glucokinase family.</text>
</comment>
<organism>
    <name type="scientific">Yersinia pestis bv. Antiqua (strain Angola)</name>
    <dbReference type="NCBI Taxonomy" id="349746"/>
    <lineage>
        <taxon>Bacteria</taxon>
        <taxon>Pseudomonadati</taxon>
        <taxon>Pseudomonadota</taxon>
        <taxon>Gammaproteobacteria</taxon>
        <taxon>Enterobacterales</taxon>
        <taxon>Yersiniaceae</taxon>
        <taxon>Yersinia</taxon>
    </lineage>
</organism>
<accession>A9QZG0</accession>
<reference key="1">
    <citation type="journal article" date="2010" name="J. Bacteriol.">
        <title>Genome sequence of the deep-rooted Yersinia pestis strain Angola reveals new insights into the evolution and pangenome of the plague bacterium.</title>
        <authorList>
            <person name="Eppinger M."/>
            <person name="Worsham P.L."/>
            <person name="Nikolich M.P."/>
            <person name="Riley D.R."/>
            <person name="Sebastian Y."/>
            <person name="Mou S."/>
            <person name="Achtman M."/>
            <person name="Lindler L.E."/>
            <person name="Ravel J."/>
        </authorList>
    </citation>
    <scope>NUCLEOTIDE SEQUENCE [LARGE SCALE GENOMIC DNA]</scope>
    <source>
        <strain>Angola</strain>
    </source>
</reference>
<feature type="chain" id="PRO_1000127732" description="Glucokinase">
    <location>
        <begin position="1"/>
        <end position="323"/>
    </location>
</feature>
<feature type="binding site" evidence="1">
    <location>
        <begin position="8"/>
        <end position="13"/>
    </location>
    <ligand>
        <name>ATP</name>
        <dbReference type="ChEBI" id="CHEBI:30616"/>
    </ligand>
</feature>
<evidence type="ECO:0000255" key="1">
    <source>
        <dbReference type="HAMAP-Rule" id="MF_00524"/>
    </source>
</evidence>